<dbReference type="EC" id="4.1.1.11" evidence="1"/>
<dbReference type="EMBL" id="CP001215">
    <property type="protein sequence ID" value="ACP17277.1"/>
    <property type="molecule type" value="Genomic_DNA"/>
</dbReference>
<dbReference type="RefSeq" id="WP_000490176.1">
    <property type="nucleotide sequence ID" value="NC_012581.1"/>
</dbReference>
<dbReference type="SMR" id="C3L8P8"/>
<dbReference type="GeneID" id="75084853"/>
<dbReference type="KEGG" id="bah:BAMEG_3031"/>
<dbReference type="HOGENOM" id="CLU_115305_2_0_9"/>
<dbReference type="UniPathway" id="UPA00028">
    <property type="reaction ID" value="UER00002"/>
</dbReference>
<dbReference type="GO" id="GO:0005829">
    <property type="term" value="C:cytosol"/>
    <property type="evidence" value="ECO:0007669"/>
    <property type="project" value="TreeGrafter"/>
</dbReference>
<dbReference type="GO" id="GO:0004068">
    <property type="term" value="F:aspartate 1-decarboxylase activity"/>
    <property type="evidence" value="ECO:0007669"/>
    <property type="project" value="UniProtKB-UniRule"/>
</dbReference>
<dbReference type="GO" id="GO:0006523">
    <property type="term" value="P:alanine biosynthetic process"/>
    <property type="evidence" value="ECO:0007669"/>
    <property type="project" value="InterPro"/>
</dbReference>
<dbReference type="GO" id="GO:0015940">
    <property type="term" value="P:pantothenate biosynthetic process"/>
    <property type="evidence" value="ECO:0007669"/>
    <property type="project" value="UniProtKB-UniRule"/>
</dbReference>
<dbReference type="CDD" id="cd06919">
    <property type="entry name" value="Asp_decarbox"/>
    <property type="match status" value="1"/>
</dbReference>
<dbReference type="Gene3D" id="2.40.40.20">
    <property type="match status" value="1"/>
</dbReference>
<dbReference type="HAMAP" id="MF_00446">
    <property type="entry name" value="PanD"/>
    <property type="match status" value="1"/>
</dbReference>
<dbReference type="InterPro" id="IPR009010">
    <property type="entry name" value="Asp_de-COase-like_dom_sf"/>
</dbReference>
<dbReference type="InterPro" id="IPR003190">
    <property type="entry name" value="Asp_decarbox"/>
</dbReference>
<dbReference type="NCBIfam" id="TIGR00223">
    <property type="entry name" value="panD"/>
    <property type="match status" value="1"/>
</dbReference>
<dbReference type="PANTHER" id="PTHR21012">
    <property type="entry name" value="ASPARTATE 1-DECARBOXYLASE"/>
    <property type="match status" value="1"/>
</dbReference>
<dbReference type="PANTHER" id="PTHR21012:SF0">
    <property type="entry name" value="ASPARTATE 1-DECARBOXYLASE"/>
    <property type="match status" value="1"/>
</dbReference>
<dbReference type="Pfam" id="PF02261">
    <property type="entry name" value="Asp_decarbox"/>
    <property type="match status" value="1"/>
</dbReference>
<dbReference type="PIRSF" id="PIRSF006246">
    <property type="entry name" value="Asp_decarbox"/>
    <property type="match status" value="1"/>
</dbReference>
<dbReference type="SUPFAM" id="SSF50692">
    <property type="entry name" value="ADC-like"/>
    <property type="match status" value="1"/>
</dbReference>
<gene>
    <name evidence="1" type="primary">panD</name>
    <name type="ordered locus">BAMEG_3031</name>
</gene>
<comment type="function">
    <text evidence="1">Catalyzes the pyruvoyl-dependent decarboxylation of aspartate to produce beta-alanine.</text>
</comment>
<comment type="catalytic activity">
    <reaction evidence="1">
        <text>L-aspartate + H(+) = beta-alanine + CO2</text>
        <dbReference type="Rhea" id="RHEA:19497"/>
        <dbReference type="ChEBI" id="CHEBI:15378"/>
        <dbReference type="ChEBI" id="CHEBI:16526"/>
        <dbReference type="ChEBI" id="CHEBI:29991"/>
        <dbReference type="ChEBI" id="CHEBI:57966"/>
        <dbReference type="EC" id="4.1.1.11"/>
    </reaction>
</comment>
<comment type="cofactor">
    <cofactor evidence="1">
        <name>pyruvate</name>
        <dbReference type="ChEBI" id="CHEBI:15361"/>
    </cofactor>
    <text evidence="1">Binds 1 pyruvoyl group covalently per subunit.</text>
</comment>
<comment type="pathway">
    <text evidence="1">Cofactor biosynthesis; (R)-pantothenate biosynthesis; beta-alanine from L-aspartate: step 1/1.</text>
</comment>
<comment type="subunit">
    <text evidence="1">Heterooctamer of four alpha and four beta subunits.</text>
</comment>
<comment type="subcellular location">
    <subcellularLocation>
        <location evidence="1">Cytoplasm</location>
    </subcellularLocation>
</comment>
<comment type="PTM">
    <text evidence="1">Is synthesized initially as an inactive proenzyme, which is activated by self-cleavage at a specific serine bond to produce a beta-subunit with a hydroxyl group at its C-terminus and an alpha-subunit with a pyruvoyl group at its N-terminus.</text>
</comment>
<comment type="similarity">
    <text evidence="1">Belongs to the PanD family.</text>
</comment>
<feature type="chain" id="PRO_1000191926" description="Aspartate 1-decarboxylase beta chain" evidence="1">
    <location>
        <begin position="1"/>
        <end position="24"/>
    </location>
</feature>
<feature type="chain" id="PRO_1000191927" description="Aspartate 1-decarboxylase alpha chain" evidence="1">
    <location>
        <begin position="25"/>
        <end position="127"/>
    </location>
</feature>
<feature type="active site" description="Schiff-base intermediate with substrate; via pyruvic acid" evidence="1">
    <location>
        <position position="25"/>
    </location>
</feature>
<feature type="active site" description="Proton donor" evidence="1">
    <location>
        <position position="58"/>
    </location>
</feature>
<feature type="binding site" evidence="1">
    <location>
        <position position="57"/>
    </location>
    <ligand>
        <name>substrate</name>
    </ligand>
</feature>
<feature type="binding site" evidence="1">
    <location>
        <begin position="73"/>
        <end position="75"/>
    </location>
    <ligand>
        <name>substrate</name>
    </ligand>
</feature>
<feature type="modified residue" description="Pyruvic acid (Ser)" evidence="1">
    <location>
        <position position="25"/>
    </location>
</feature>
<accession>C3L8P8</accession>
<organism>
    <name type="scientific">Bacillus anthracis (strain CDC 684 / NRRL 3495)</name>
    <dbReference type="NCBI Taxonomy" id="568206"/>
    <lineage>
        <taxon>Bacteria</taxon>
        <taxon>Bacillati</taxon>
        <taxon>Bacillota</taxon>
        <taxon>Bacilli</taxon>
        <taxon>Bacillales</taxon>
        <taxon>Bacillaceae</taxon>
        <taxon>Bacillus</taxon>
        <taxon>Bacillus cereus group</taxon>
    </lineage>
</organism>
<reference key="1">
    <citation type="submission" date="2008-10" db="EMBL/GenBank/DDBJ databases">
        <title>Genome sequence of Bacillus anthracis str. CDC 684.</title>
        <authorList>
            <person name="Dodson R.J."/>
            <person name="Munk A.C."/>
            <person name="Brettin T."/>
            <person name="Bruce D."/>
            <person name="Detter C."/>
            <person name="Tapia R."/>
            <person name="Han C."/>
            <person name="Sutton G."/>
            <person name="Sims D."/>
        </authorList>
    </citation>
    <scope>NUCLEOTIDE SEQUENCE [LARGE SCALE GENOMIC DNA]</scope>
    <source>
        <strain>CDC 684 / NRRL 3495</strain>
    </source>
</reference>
<protein>
    <recommendedName>
        <fullName evidence="1">Aspartate 1-decarboxylase</fullName>
        <ecNumber evidence="1">4.1.1.11</ecNumber>
    </recommendedName>
    <alternativeName>
        <fullName evidence="1">Aspartate alpha-decarboxylase</fullName>
    </alternativeName>
    <component>
        <recommendedName>
            <fullName evidence="1">Aspartate 1-decarboxylase beta chain</fullName>
        </recommendedName>
    </component>
    <component>
        <recommendedName>
            <fullName evidence="1">Aspartate 1-decarboxylase alpha chain</fullName>
        </recommendedName>
    </component>
</protein>
<name>PAND_BACAC</name>
<evidence type="ECO:0000255" key="1">
    <source>
        <dbReference type="HAMAP-Rule" id="MF_00446"/>
    </source>
</evidence>
<proteinExistence type="inferred from homology"/>
<keyword id="KW-0068">Autocatalytic cleavage</keyword>
<keyword id="KW-0963">Cytoplasm</keyword>
<keyword id="KW-0210">Decarboxylase</keyword>
<keyword id="KW-0456">Lyase</keyword>
<keyword id="KW-0566">Pantothenate biosynthesis</keyword>
<keyword id="KW-0670">Pyruvate</keyword>
<keyword id="KW-0704">Schiff base</keyword>
<keyword id="KW-0865">Zymogen</keyword>
<sequence length="127" mass="13909">MFRTMMRAKLHRATVTEANLNYVGSITIDEDLMDAVNIVENEKVQIVNNNNGARLETYVIKGERGSGVVCLNGAAARLVQPGDKVIIICYGLVAEENIHKQEPKIAVLDDDNQIIEMLGAEKAGTIL</sequence>